<feature type="chain" id="PRO_1000048265" description="Cytidylate kinase">
    <location>
        <begin position="1"/>
        <end position="217"/>
    </location>
</feature>
<feature type="binding site" evidence="1">
    <location>
        <begin position="21"/>
        <end position="29"/>
    </location>
    <ligand>
        <name>ATP</name>
        <dbReference type="ChEBI" id="CHEBI:30616"/>
    </ligand>
</feature>
<comment type="catalytic activity">
    <reaction evidence="1">
        <text>CMP + ATP = CDP + ADP</text>
        <dbReference type="Rhea" id="RHEA:11600"/>
        <dbReference type="ChEBI" id="CHEBI:30616"/>
        <dbReference type="ChEBI" id="CHEBI:58069"/>
        <dbReference type="ChEBI" id="CHEBI:60377"/>
        <dbReference type="ChEBI" id="CHEBI:456216"/>
        <dbReference type="EC" id="2.7.4.25"/>
    </reaction>
</comment>
<comment type="catalytic activity">
    <reaction evidence="1">
        <text>dCMP + ATP = dCDP + ADP</text>
        <dbReference type="Rhea" id="RHEA:25094"/>
        <dbReference type="ChEBI" id="CHEBI:30616"/>
        <dbReference type="ChEBI" id="CHEBI:57566"/>
        <dbReference type="ChEBI" id="CHEBI:58593"/>
        <dbReference type="ChEBI" id="CHEBI:456216"/>
        <dbReference type="EC" id="2.7.4.25"/>
    </reaction>
</comment>
<comment type="subcellular location">
    <subcellularLocation>
        <location evidence="1">Cytoplasm</location>
    </subcellularLocation>
</comment>
<comment type="similarity">
    <text evidence="1">Belongs to the cytidylate kinase family. Type 1 subfamily.</text>
</comment>
<dbReference type="EC" id="2.7.4.25" evidence="1"/>
<dbReference type="EMBL" id="CP000849">
    <property type="protein sequence ID" value="ABV79462.1"/>
    <property type="molecule type" value="Genomic_DNA"/>
</dbReference>
<dbReference type="RefSeq" id="WP_011477103.1">
    <property type="nucleotide sequence ID" value="NC_009883.1"/>
</dbReference>
<dbReference type="SMR" id="A8GX62"/>
<dbReference type="KEGG" id="rbo:A1I_05675"/>
<dbReference type="HOGENOM" id="CLU_079959_0_2_5"/>
<dbReference type="GO" id="GO:0005737">
    <property type="term" value="C:cytoplasm"/>
    <property type="evidence" value="ECO:0007669"/>
    <property type="project" value="UniProtKB-SubCell"/>
</dbReference>
<dbReference type="GO" id="GO:0005524">
    <property type="term" value="F:ATP binding"/>
    <property type="evidence" value="ECO:0007669"/>
    <property type="project" value="UniProtKB-UniRule"/>
</dbReference>
<dbReference type="GO" id="GO:0036430">
    <property type="term" value="F:CMP kinase activity"/>
    <property type="evidence" value="ECO:0007669"/>
    <property type="project" value="RHEA"/>
</dbReference>
<dbReference type="GO" id="GO:0036431">
    <property type="term" value="F:dCMP kinase activity"/>
    <property type="evidence" value="ECO:0007669"/>
    <property type="project" value="RHEA"/>
</dbReference>
<dbReference type="GO" id="GO:0006220">
    <property type="term" value="P:pyrimidine nucleotide metabolic process"/>
    <property type="evidence" value="ECO:0007669"/>
    <property type="project" value="UniProtKB-UniRule"/>
</dbReference>
<dbReference type="CDD" id="cd02020">
    <property type="entry name" value="CMPK"/>
    <property type="match status" value="1"/>
</dbReference>
<dbReference type="Gene3D" id="3.40.50.300">
    <property type="entry name" value="P-loop containing nucleotide triphosphate hydrolases"/>
    <property type="match status" value="1"/>
</dbReference>
<dbReference type="HAMAP" id="MF_00238">
    <property type="entry name" value="Cytidyl_kinase_type1"/>
    <property type="match status" value="1"/>
</dbReference>
<dbReference type="InterPro" id="IPR003136">
    <property type="entry name" value="Cytidylate_kin"/>
</dbReference>
<dbReference type="InterPro" id="IPR011994">
    <property type="entry name" value="Cytidylate_kinase_dom"/>
</dbReference>
<dbReference type="InterPro" id="IPR027417">
    <property type="entry name" value="P-loop_NTPase"/>
</dbReference>
<dbReference type="NCBIfam" id="TIGR00017">
    <property type="entry name" value="cmk"/>
    <property type="match status" value="1"/>
</dbReference>
<dbReference type="Pfam" id="PF02224">
    <property type="entry name" value="Cytidylate_kin"/>
    <property type="match status" value="1"/>
</dbReference>
<dbReference type="SUPFAM" id="SSF52540">
    <property type="entry name" value="P-loop containing nucleoside triphosphate hydrolases"/>
    <property type="match status" value="1"/>
</dbReference>
<organism>
    <name type="scientific">Rickettsia bellii (strain OSU 85-389)</name>
    <dbReference type="NCBI Taxonomy" id="391896"/>
    <lineage>
        <taxon>Bacteria</taxon>
        <taxon>Pseudomonadati</taxon>
        <taxon>Pseudomonadota</taxon>
        <taxon>Alphaproteobacteria</taxon>
        <taxon>Rickettsiales</taxon>
        <taxon>Rickettsiaceae</taxon>
        <taxon>Rickettsieae</taxon>
        <taxon>Rickettsia</taxon>
        <taxon>belli group</taxon>
    </lineage>
</organism>
<protein>
    <recommendedName>
        <fullName evidence="1">Cytidylate kinase</fullName>
        <shortName evidence="1">CK</shortName>
        <ecNumber evidence="1">2.7.4.25</ecNumber>
    </recommendedName>
    <alternativeName>
        <fullName evidence="1">Cytidine monophosphate kinase</fullName>
        <shortName evidence="1">CMP kinase</shortName>
    </alternativeName>
</protein>
<accession>A8GX62</accession>
<proteinExistence type="inferred from homology"/>
<keyword id="KW-0067">ATP-binding</keyword>
<keyword id="KW-0963">Cytoplasm</keyword>
<keyword id="KW-0418">Kinase</keyword>
<keyword id="KW-0547">Nucleotide-binding</keyword>
<keyword id="KW-0808">Transferase</keyword>
<gene>
    <name evidence="1" type="primary">cmk</name>
    <name type="ordered locus">A1I_05675</name>
</gene>
<name>KCY_RICB8</name>
<sequence>MTNLKSKALDFTQNFVIALDGPAASGKGTIGFMLAEKFSLKYVQSSIVYRQLAFNCIKEKIDITDINKVISLSKEINITDKFDLEDENIGGVASQIAVIAEVRDNLNKHLVKLINTTPRILMEGRDIGTIVAPNADFKIFITANPEVRAERRYKQLQAKGKACILDEILQQIILRDKRDKEREVAPLLPALDALIIDTSKLSPLSVVEQIMQFILKE</sequence>
<evidence type="ECO:0000255" key="1">
    <source>
        <dbReference type="HAMAP-Rule" id="MF_00238"/>
    </source>
</evidence>
<reference key="1">
    <citation type="submission" date="2007-09" db="EMBL/GenBank/DDBJ databases">
        <title>Complete genome sequencing of Rickettsia bellii.</title>
        <authorList>
            <person name="Madan A."/>
            <person name="Lee H."/>
            <person name="Madan A."/>
            <person name="Yoon J.-G."/>
            <person name="Ryu G.-Y."/>
            <person name="Dasch G."/>
            <person name="Ereemeva M."/>
        </authorList>
    </citation>
    <scope>NUCLEOTIDE SEQUENCE [LARGE SCALE GENOMIC DNA]</scope>
    <source>
        <strain>OSU 85-389</strain>
    </source>
</reference>